<dbReference type="EMBL" id="AL132971">
    <property type="protein sequence ID" value="CAB81808.1"/>
    <property type="molecule type" value="Genomic_DNA"/>
</dbReference>
<dbReference type="EMBL" id="CP002686">
    <property type="protein sequence ID" value="AEE79229.1"/>
    <property type="molecule type" value="Genomic_DNA"/>
</dbReference>
<dbReference type="EMBL" id="AF446889">
    <property type="protein sequence ID" value="AAL38622.1"/>
    <property type="molecule type" value="mRNA"/>
</dbReference>
<dbReference type="EMBL" id="AY052675">
    <property type="protein sequence ID" value="AAK96579.1"/>
    <property type="molecule type" value="mRNA"/>
</dbReference>
<dbReference type="PIR" id="T47602">
    <property type="entry name" value="T47602"/>
</dbReference>
<dbReference type="RefSeq" id="NP_191011.1">
    <property type="nucleotide sequence ID" value="NM_115303.2"/>
</dbReference>
<dbReference type="BioGRID" id="9925">
    <property type="interactions" value="9"/>
</dbReference>
<dbReference type="IntAct" id="Q9M2U4">
    <property type="interactions" value="6"/>
</dbReference>
<dbReference type="STRING" id="3702.Q9M2U4"/>
<dbReference type="PaxDb" id="3702-AT3G54430.1"/>
<dbReference type="EnsemblPlants" id="AT3G54430.1">
    <property type="protein sequence ID" value="AT3G54430.1"/>
    <property type="gene ID" value="AT3G54430"/>
</dbReference>
<dbReference type="GeneID" id="824609"/>
<dbReference type="Gramene" id="AT3G54430.1">
    <property type="protein sequence ID" value="AT3G54430.1"/>
    <property type="gene ID" value="AT3G54430"/>
</dbReference>
<dbReference type="KEGG" id="ath:AT3G54430"/>
<dbReference type="Araport" id="AT3G54430"/>
<dbReference type="TAIR" id="AT3G54430">
    <property type="gene designation" value="SRS6"/>
</dbReference>
<dbReference type="eggNOG" id="ENOG502SJSF">
    <property type="taxonomic scope" value="Eukaryota"/>
</dbReference>
<dbReference type="HOGENOM" id="CLU_041493_3_0_1"/>
<dbReference type="InParanoid" id="Q9M2U4"/>
<dbReference type="OMA" id="ECSFERC"/>
<dbReference type="OrthoDB" id="1913243at2759"/>
<dbReference type="PhylomeDB" id="Q9M2U4"/>
<dbReference type="PRO" id="PR:Q9M2U4"/>
<dbReference type="Proteomes" id="UP000006548">
    <property type="component" value="Chromosome 3"/>
</dbReference>
<dbReference type="ExpressionAtlas" id="Q9M2U4">
    <property type="expression patterns" value="baseline and differential"/>
</dbReference>
<dbReference type="GO" id="GO:0005634">
    <property type="term" value="C:nucleus"/>
    <property type="evidence" value="ECO:0000250"/>
    <property type="project" value="UniProtKB"/>
</dbReference>
<dbReference type="GO" id="GO:0003677">
    <property type="term" value="F:DNA binding"/>
    <property type="evidence" value="ECO:0007669"/>
    <property type="project" value="UniProtKB-KW"/>
</dbReference>
<dbReference type="GO" id="GO:0003700">
    <property type="term" value="F:DNA-binding transcription factor activity"/>
    <property type="evidence" value="ECO:0007669"/>
    <property type="project" value="InterPro"/>
</dbReference>
<dbReference type="GO" id="GO:0046872">
    <property type="term" value="F:metal ion binding"/>
    <property type="evidence" value="ECO:0007669"/>
    <property type="project" value="UniProtKB-KW"/>
</dbReference>
<dbReference type="GO" id="GO:0009851">
    <property type="term" value="P:auxin biosynthetic process"/>
    <property type="evidence" value="ECO:0007669"/>
    <property type="project" value="UniProtKB-KW"/>
</dbReference>
<dbReference type="GO" id="GO:0009734">
    <property type="term" value="P:auxin-activated signaling pathway"/>
    <property type="evidence" value="ECO:0007669"/>
    <property type="project" value="UniProtKB-KW"/>
</dbReference>
<dbReference type="InterPro" id="IPR007818">
    <property type="entry name" value="SHI"/>
</dbReference>
<dbReference type="InterPro" id="IPR006511">
    <property type="entry name" value="SHI_C"/>
</dbReference>
<dbReference type="InterPro" id="IPR006510">
    <property type="entry name" value="Znf_LRP1"/>
</dbReference>
<dbReference type="NCBIfam" id="TIGR01624">
    <property type="entry name" value="LRP1_Cterm"/>
    <property type="match status" value="1"/>
</dbReference>
<dbReference type="NCBIfam" id="TIGR01623">
    <property type="entry name" value="put_zinc_LRP1"/>
    <property type="match status" value="1"/>
</dbReference>
<dbReference type="PANTHER" id="PTHR31604">
    <property type="entry name" value="PROTEIN LATERAL ROOT PRIMORDIUM 1"/>
    <property type="match status" value="1"/>
</dbReference>
<dbReference type="PANTHER" id="PTHR31604:SF28">
    <property type="entry name" value="PROTEIN SHI RELATED SEQUENCE 6"/>
    <property type="match status" value="1"/>
</dbReference>
<dbReference type="Pfam" id="PF05142">
    <property type="entry name" value="DUF702"/>
    <property type="match status" value="1"/>
</dbReference>
<reference key="1">
    <citation type="journal article" date="2000" name="Nature">
        <title>Sequence and analysis of chromosome 3 of the plant Arabidopsis thaliana.</title>
        <authorList>
            <person name="Salanoubat M."/>
            <person name="Lemcke K."/>
            <person name="Rieger M."/>
            <person name="Ansorge W."/>
            <person name="Unseld M."/>
            <person name="Fartmann B."/>
            <person name="Valle G."/>
            <person name="Bloecker H."/>
            <person name="Perez-Alonso M."/>
            <person name="Obermaier B."/>
            <person name="Delseny M."/>
            <person name="Boutry M."/>
            <person name="Grivell L.A."/>
            <person name="Mache R."/>
            <person name="Puigdomenech P."/>
            <person name="De Simone V."/>
            <person name="Choisne N."/>
            <person name="Artiguenave F."/>
            <person name="Robert C."/>
            <person name="Brottier P."/>
            <person name="Wincker P."/>
            <person name="Cattolico L."/>
            <person name="Weissenbach J."/>
            <person name="Saurin W."/>
            <person name="Quetier F."/>
            <person name="Schaefer M."/>
            <person name="Mueller-Auer S."/>
            <person name="Gabel C."/>
            <person name="Fuchs M."/>
            <person name="Benes V."/>
            <person name="Wurmbach E."/>
            <person name="Drzonek H."/>
            <person name="Erfle H."/>
            <person name="Jordan N."/>
            <person name="Bangert S."/>
            <person name="Wiedelmann R."/>
            <person name="Kranz H."/>
            <person name="Voss H."/>
            <person name="Holland R."/>
            <person name="Brandt P."/>
            <person name="Nyakatura G."/>
            <person name="Vezzi A."/>
            <person name="D'Angelo M."/>
            <person name="Pallavicini A."/>
            <person name="Toppo S."/>
            <person name="Simionati B."/>
            <person name="Conrad A."/>
            <person name="Hornischer K."/>
            <person name="Kauer G."/>
            <person name="Loehnert T.-H."/>
            <person name="Nordsiek G."/>
            <person name="Reichelt J."/>
            <person name="Scharfe M."/>
            <person name="Schoen O."/>
            <person name="Bargues M."/>
            <person name="Terol J."/>
            <person name="Climent J."/>
            <person name="Navarro P."/>
            <person name="Collado C."/>
            <person name="Perez-Perez A."/>
            <person name="Ottenwaelder B."/>
            <person name="Duchemin D."/>
            <person name="Cooke R."/>
            <person name="Laudie M."/>
            <person name="Berger-Llauro C."/>
            <person name="Purnelle B."/>
            <person name="Masuy D."/>
            <person name="de Haan M."/>
            <person name="Maarse A.C."/>
            <person name="Alcaraz J.-P."/>
            <person name="Cottet A."/>
            <person name="Casacuberta E."/>
            <person name="Monfort A."/>
            <person name="Argiriou A."/>
            <person name="Flores M."/>
            <person name="Liguori R."/>
            <person name="Vitale D."/>
            <person name="Mannhaupt G."/>
            <person name="Haase D."/>
            <person name="Schoof H."/>
            <person name="Rudd S."/>
            <person name="Zaccaria P."/>
            <person name="Mewes H.-W."/>
            <person name="Mayer K.F.X."/>
            <person name="Kaul S."/>
            <person name="Town C.D."/>
            <person name="Koo H.L."/>
            <person name="Tallon L.J."/>
            <person name="Jenkins J."/>
            <person name="Rooney T."/>
            <person name="Rizzo M."/>
            <person name="Walts A."/>
            <person name="Utterback T."/>
            <person name="Fujii C.Y."/>
            <person name="Shea T.P."/>
            <person name="Creasy T.H."/>
            <person name="Haas B."/>
            <person name="Maiti R."/>
            <person name="Wu D."/>
            <person name="Peterson J."/>
            <person name="Van Aken S."/>
            <person name="Pai G."/>
            <person name="Militscher J."/>
            <person name="Sellers P."/>
            <person name="Gill J.E."/>
            <person name="Feldblyum T.V."/>
            <person name="Preuss D."/>
            <person name="Lin X."/>
            <person name="Nierman W.C."/>
            <person name="Salzberg S.L."/>
            <person name="White O."/>
            <person name="Venter J.C."/>
            <person name="Fraser C.M."/>
            <person name="Kaneko T."/>
            <person name="Nakamura Y."/>
            <person name="Sato S."/>
            <person name="Kato T."/>
            <person name="Asamizu E."/>
            <person name="Sasamoto S."/>
            <person name="Kimura T."/>
            <person name="Idesawa K."/>
            <person name="Kawashima K."/>
            <person name="Kishida Y."/>
            <person name="Kiyokawa C."/>
            <person name="Kohara M."/>
            <person name="Matsumoto M."/>
            <person name="Matsuno A."/>
            <person name="Muraki A."/>
            <person name="Nakayama S."/>
            <person name="Nakazaki N."/>
            <person name="Shinpo S."/>
            <person name="Takeuchi C."/>
            <person name="Wada T."/>
            <person name="Watanabe A."/>
            <person name="Yamada M."/>
            <person name="Yasuda M."/>
            <person name="Tabata S."/>
        </authorList>
    </citation>
    <scope>NUCLEOTIDE SEQUENCE [LARGE SCALE GENOMIC DNA]</scope>
    <source>
        <strain>cv. Columbia</strain>
    </source>
</reference>
<reference key="2">
    <citation type="journal article" date="2017" name="Plant J.">
        <title>Araport11: a complete reannotation of the Arabidopsis thaliana reference genome.</title>
        <authorList>
            <person name="Cheng C.Y."/>
            <person name="Krishnakumar V."/>
            <person name="Chan A.P."/>
            <person name="Thibaud-Nissen F."/>
            <person name="Schobel S."/>
            <person name="Town C.D."/>
        </authorList>
    </citation>
    <scope>GENOME REANNOTATION</scope>
    <source>
        <strain>cv. Columbia</strain>
    </source>
</reference>
<reference key="3">
    <citation type="journal article" date="2003" name="Science">
        <title>Empirical analysis of transcriptional activity in the Arabidopsis genome.</title>
        <authorList>
            <person name="Yamada K."/>
            <person name="Lim J."/>
            <person name="Dale J.M."/>
            <person name="Chen H."/>
            <person name="Shinn P."/>
            <person name="Palm C.J."/>
            <person name="Southwick A.M."/>
            <person name="Wu H.C."/>
            <person name="Kim C.J."/>
            <person name="Nguyen M."/>
            <person name="Pham P.K."/>
            <person name="Cheuk R.F."/>
            <person name="Karlin-Newmann G."/>
            <person name="Liu S.X."/>
            <person name="Lam B."/>
            <person name="Sakano H."/>
            <person name="Wu T."/>
            <person name="Yu G."/>
            <person name="Miranda M."/>
            <person name="Quach H.L."/>
            <person name="Tripp M."/>
            <person name="Chang C.H."/>
            <person name="Lee J.M."/>
            <person name="Toriumi M.J."/>
            <person name="Chan M.M."/>
            <person name="Tang C.C."/>
            <person name="Onodera C.S."/>
            <person name="Deng J.M."/>
            <person name="Akiyama K."/>
            <person name="Ansari Y."/>
            <person name="Arakawa T."/>
            <person name="Banh J."/>
            <person name="Banno F."/>
            <person name="Bowser L."/>
            <person name="Brooks S.Y."/>
            <person name="Carninci P."/>
            <person name="Chao Q."/>
            <person name="Choy N."/>
            <person name="Enju A."/>
            <person name="Goldsmith A.D."/>
            <person name="Gurjal M."/>
            <person name="Hansen N.F."/>
            <person name="Hayashizaki Y."/>
            <person name="Johnson-Hopson C."/>
            <person name="Hsuan V.W."/>
            <person name="Iida K."/>
            <person name="Karnes M."/>
            <person name="Khan S."/>
            <person name="Koesema E."/>
            <person name="Ishida J."/>
            <person name="Jiang P.X."/>
            <person name="Jones T."/>
            <person name="Kawai J."/>
            <person name="Kamiya A."/>
            <person name="Meyers C."/>
            <person name="Nakajima M."/>
            <person name="Narusaka M."/>
            <person name="Seki M."/>
            <person name="Sakurai T."/>
            <person name="Satou M."/>
            <person name="Tamse R."/>
            <person name="Vaysberg M."/>
            <person name="Wallender E.K."/>
            <person name="Wong C."/>
            <person name="Yamamura Y."/>
            <person name="Yuan S."/>
            <person name="Shinozaki K."/>
            <person name="Davis R.W."/>
            <person name="Theologis A."/>
            <person name="Ecker J.R."/>
        </authorList>
    </citation>
    <scope>NUCLEOTIDE SEQUENCE [LARGE SCALE MRNA]</scope>
    <source>
        <strain>cv. Columbia</strain>
    </source>
</reference>
<reference key="4">
    <citation type="journal article" date="2006" name="Plant J.">
        <title>Functionally redundant SHI family genes regulate Arabidopsis gynoecium development in a dose-dependent manner.</title>
        <authorList>
            <person name="Kuusk S."/>
            <person name="Sohlberg J.J."/>
            <person name="Magnus Eklund D."/>
            <person name="Sundberg E."/>
        </authorList>
    </citation>
    <scope>GENE FAMILY</scope>
    <scope>NOMENCLATURE</scope>
</reference>
<reference key="5">
    <citation type="journal article" date="2011" name="Plant Physiol.">
        <title>Expression of Arabidopsis SHORT INTERNODES/STYLISH family genes in auxin biosynthesis zones of aerial organs is dependent on a GCC box-like regulatory element.</title>
        <authorList>
            <person name="Eklund D.M."/>
            <person name="Cierlik I."/>
            <person name="Staaldal V."/>
            <person name="Claes A.R."/>
            <person name="Vestman D."/>
            <person name="Chandler J."/>
            <person name="Sundberg E."/>
        </authorList>
    </citation>
    <scope>GENE FAMILY</scope>
</reference>
<comment type="function">
    <text evidence="1">Transcription activator that binds DNA on 5'-ACTCTAC-3' and promotes auxin homeostasis-regulating gene expression (e.g. YUC genes), as well as genes affecting stamen development, cell expansion and timing of flowering. Synergistically with other SHI-related proteins, regulates gynoecium, stamen and leaf development in a dose-dependent manner, controlling apical-basal patterning. Promotes style and stigma formation, and influences vascular development during gynoecium development. May also have a role in the formation and/or maintenance of the shoot apical meristem (SAM) (By similarity).</text>
</comment>
<comment type="interaction">
    <interactant intactId="EBI-15201394">
        <id>Q9M2U4</id>
    </interactant>
    <interactant intactId="EBI-15193733">
        <id>Q9SI19</id>
        <label>SRS4</label>
    </interactant>
    <organismsDiffer>false</organismsDiffer>
    <experiments>4</experiments>
</comment>
<comment type="subcellular location">
    <subcellularLocation>
        <location evidence="1">Nucleus</location>
    </subcellularLocation>
</comment>
<comment type="similarity">
    <text evidence="3">Belongs to the SHI protein family.</text>
</comment>
<feature type="chain" id="PRO_0000424578" description="Protein SHI RELATED SEQUENCE 6">
    <location>
        <begin position="1"/>
        <end position="183"/>
    </location>
</feature>
<feature type="DNA-binding region" description="Zn(2)-C6 fungal-type; degenerate" evidence="1">
    <location>
        <begin position="41"/>
        <end position="68"/>
    </location>
</feature>
<feature type="region of interest" description="Disordered" evidence="2">
    <location>
        <begin position="79"/>
        <end position="121"/>
    </location>
</feature>
<feature type="short sequence motif" description="Required for homo- and heterodimerization" evidence="1">
    <location>
        <begin position="157"/>
        <end position="160"/>
    </location>
</feature>
<feature type="compositionally biased region" description="Low complexity" evidence="2">
    <location>
        <begin position="79"/>
        <end position="88"/>
    </location>
</feature>
<feature type="compositionally biased region" description="Polar residues" evidence="2">
    <location>
        <begin position="100"/>
        <end position="113"/>
    </location>
</feature>
<feature type="binding site" evidence="1">
    <location>
        <position position="41"/>
    </location>
    <ligand>
        <name>Zn(2+)</name>
        <dbReference type="ChEBI" id="CHEBI:29105"/>
        <label>1</label>
    </ligand>
</feature>
<feature type="binding site" evidence="1">
    <location>
        <position position="41"/>
    </location>
    <ligand>
        <name>Zn(2+)</name>
        <dbReference type="ChEBI" id="CHEBI:29105"/>
        <label>2</label>
    </ligand>
</feature>
<feature type="binding site" evidence="1">
    <location>
        <position position="44"/>
    </location>
    <ligand>
        <name>Zn(2+)</name>
        <dbReference type="ChEBI" id="CHEBI:29105"/>
        <label>1</label>
    </ligand>
</feature>
<feature type="binding site" evidence="1">
    <location>
        <position position="52"/>
    </location>
    <ligand>
        <name>Zn(2+)</name>
        <dbReference type="ChEBI" id="CHEBI:29105"/>
        <label>1</label>
    </ligand>
</feature>
<feature type="binding site" evidence="1">
    <location>
        <position position="57"/>
    </location>
    <ligand>
        <name>Zn(2+)</name>
        <dbReference type="ChEBI" id="CHEBI:29105"/>
        <label>1</label>
    </ligand>
</feature>
<feature type="binding site" evidence="1">
    <location>
        <position position="57"/>
    </location>
    <ligand>
        <name>Zn(2+)</name>
        <dbReference type="ChEBI" id="CHEBI:29105"/>
        <label>2</label>
    </ligand>
</feature>
<feature type="binding site" evidence="1">
    <location>
        <position position="61"/>
    </location>
    <ligand>
        <name>Zn(2+)</name>
        <dbReference type="ChEBI" id="CHEBI:29105"/>
        <label>2</label>
    </ligand>
</feature>
<feature type="binding site" evidence="1">
    <location>
        <position position="68"/>
    </location>
    <ligand>
        <name>Zn(2+)</name>
        <dbReference type="ChEBI" id="CHEBI:29105"/>
        <label>2</label>
    </ligand>
</feature>
<organism>
    <name type="scientific">Arabidopsis thaliana</name>
    <name type="common">Mouse-ear cress</name>
    <dbReference type="NCBI Taxonomy" id="3702"/>
    <lineage>
        <taxon>Eukaryota</taxon>
        <taxon>Viridiplantae</taxon>
        <taxon>Streptophyta</taxon>
        <taxon>Embryophyta</taxon>
        <taxon>Tracheophyta</taxon>
        <taxon>Spermatophyta</taxon>
        <taxon>Magnoliopsida</taxon>
        <taxon>eudicotyledons</taxon>
        <taxon>Gunneridae</taxon>
        <taxon>Pentapetalae</taxon>
        <taxon>rosids</taxon>
        <taxon>malvids</taxon>
        <taxon>Brassicales</taxon>
        <taxon>Brassicaceae</taxon>
        <taxon>Camelineae</taxon>
        <taxon>Arabidopsis</taxon>
    </lineage>
</organism>
<sequence length="183" mass="20326">MLGLRNIILLSPPPTQITRPSLPPVNFAAVEDNNTVGEKVCRDCGNRAKKECLFERCRTCCKSRGYNCVTHVKSTWIPSSATRSSSSPSERKKKLKIDKQSSPNVSLLPTTTSRQERGFREGLPGKIEAPAVFKRTRVTAISNNEQAEIGYQATVTISGHIFKGFLHYYGVDHNKAFPCLSQK</sequence>
<keyword id="KW-0010">Activator</keyword>
<keyword id="KW-0073">Auxin biosynthesis</keyword>
<keyword id="KW-0927">Auxin signaling pathway</keyword>
<keyword id="KW-0217">Developmental protein</keyword>
<keyword id="KW-0238">DNA-binding</keyword>
<keyword id="KW-0479">Metal-binding</keyword>
<keyword id="KW-0539">Nucleus</keyword>
<keyword id="KW-1185">Reference proteome</keyword>
<keyword id="KW-0862">Zinc</keyword>
<evidence type="ECO:0000250" key="1"/>
<evidence type="ECO:0000256" key="2">
    <source>
        <dbReference type="SAM" id="MobiDB-lite"/>
    </source>
</evidence>
<evidence type="ECO:0000305" key="3"/>
<proteinExistence type="evidence at protein level"/>
<protein>
    <recommendedName>
        <fullName>Protein SHI RELATED SEQUENCE 6</fullName>
    </recommendedName>
</protein>
<gene>
    <name type="primary">SRS6</name>
    <name type="ordered locus">At3g54430</name>
    <name type="ORF">T12E18.120</name>
</gene>
<name>SRS6_ARATH</name>
<accession>Q9M2U4</accession>